<protein>
    <recommendedName>
        <fullName>Topoisomerase 1-associated factor 1</fullName>
    </recommendedName>
</protein>
<feature type="chain" id="PRO_0000301730" description="Topoisomerase 1-associated factor 1">
    <location>
        <begin position="1"/>
        <end position="1169"/>
    </location>
</feature>
<feature type="region of interest" description="Disordered" evidence="2">
    <location>
        <begin position="573"/>
        <end position="600"/>
    </location>
</feature>
<feature type="region of interest" description="Disordered" evidence="2">
    <location>
        <begin position="900"/>
        <end position="1150"/>
    </location>
</feature>
<feature type="compositionally biased region" description="Acidic residues" evidence="2">
    <location>
        <begin position="583"/>
        <end position="599"/>
    </location>
</feature>
<feature type="compositionally biased region" description="Acidic residues" evidence="2">
    <location>
        <begin position="917"/>
        <end position="928"/>
    </location>
</feature>
<feature type="compositionally biased region" description="Pro residues" evidence="2">
    <location>
        <begin position="931"/>
        <end position="940"/>
    </location>
</feature>
<feature type="compositionally biased region" description="Acidic residues" evidence="2">
    <location>
        <begin position="958"/>
        <end position="972"/>
    </location>
</feature>
<feature type="compositionally biased region" description="Basic and acidic residues" evidence="2">
    <location>
        <begin position="973"/>
        <end position="1000"/>
    </location>
</feature>
<feature type="compositionally biased region" description="Basic and acidic residues" evidence="2">
    <location>
        <begin position="1009"/>
        <end position="1024"/>
    </location>
</feature>
<feature type="compositionally biased region" description="Acidic residues" evidence="2">
    <location>
        <begin position="1100"/>
        <end position="1112"/>
    </location>
</feature>
<feature type="compositionally biased region" description="Basic and acidic residues" evidence="2">
    <location>
        <begin position="1113"/>
        <end position="1140"/>
    </location>
</feature>
<proteinExistence type="inferred from homology"/>
<dbReference type="EMBL" id="AM270309">
    <property type="protein sequence ID" value="CAK41843.1"/>
    <property type="status" value="ALT_SEQ"/>
    <property type="molecule type" value="Genomic_DNA"/>
</dbReference>
<dbReference type="RefSeq" id="XP_001400673.2">
    <property type="nucleotide sequence ID" value="XM_001400636.2"/>
</dbReference>
<dbReference type="SMR" id="A2R2E3"/>
<dbReference type="EnsemblFungi" id="CAK41843">
    <property type="protein sequence ID" value="CAK41843"/>
    <property type="gene ID" value="An14g00440"/>
</dbReference>
<dbReference type="VEuPathDB" id="FungiDB:An14g00440"/>
<dbReference type="OrthoDB" id="116241at5052"/>
<dbReference type="Proteomes" id="UP000006706">
    <property type="component" value="Chromosome 1R"/>
</dbReference>
<dbReference type="GO" id="GO:0031298">
    <property type="term" value="C:replication fork protection complex"/>
    <property type="evidence" value="ECO:0007669"/>
    <property type="project" value="TreeGrafter"/>
</dbReference>
<dbReference type="GO" id="GO:0003677">
    <property type="term" value="F:DNA binding"/>
    <property type="evidence" value="ECO:0007669"/>
    <property type="project" value="TreeGrafter"/>
</dbReference>
<dbReference type="GO" id="GO:0006281">
    <property type="term" value="P:DNA repair"/>
    <property type="evidence" value="ECO:0007669"/>
    <property type="project" value="UniProtKB-KW"/>
</dbReference>
<dbReference type="GO" id="GO:0000076">
    <property type="term" value="P:DNA replication checkpoint signaling"/>
    <property type="evidence" value="ECO:0007669"/>
    <property type="project" value="TreeGrafter"/>
</dbReference>
<dbReference type="GO" id="GO:0051321">
    <property type="term" value="P:meiotic cell cycle"/>
    <property type="evidence" value="ECO:0007669"/>
    <property type="project" value="UniProtKB-KW"/>
</dbReference>
<dbReference type="GO" id="GO:0043111">
    <property type="term" value="P:replication fork arrest"/>
    <property type="evidence" value="ECO:0007669"/>
    <property type="project" value="TreeGrafter"/>
</dbReference>
<dbReference type="InterPro" id="IPR044998">
    <property type="entry name" value="Timeless"/>
</dbReference>
<dbReference type="InterPro" id="IPR006906">
    <property type="entry name" value="Timeless_N"/>
</dbReference>
<dbReference type="PANTHER" id="PTHR22940:SF4">
    <property type="entry name" value="PROTEIN TIMELESS HOMOLOG"/>
    <property type="match status" value="1"/>
</dbReference>
<dbReference type="PANTHER" id="PTHR22940">
    <property type="entry name" value="TIMEOUT/TIMELESS-2"/>
    <property type="match status" value="1"/>
</dbReference>
<dbReference type="Pfam" id="PF04821">
    <property type="entry name" value="TIMELESS"/>
    <property type="match status" value="1"/>
</dbReference>
<gene>
    <name type="primary">tof1</name>
    <name type="ORF">An14g00440</name>
</gene>
<accession>A2R2E3</accession>
<organism>
    <name type="scientific">Aspergillus niger (strain ATCC MYA-4892 / CBS 513.88 / FGSC A1513)</name>
    <dbReference type="NCBI Taxonomy" id="425011"/>
    <lineage>
        <taxon>Eukaryota</taxon>
        <taxon>Fungi</taxon>
        <taxon>Dikarya</taxon>
        <taxon>Ascomycota</taxon>
        <taxon>Pezizomycotina</taxon>
        <taxon>Eurotiomycetes</taxon>
        <taxon>Eurotiomycetidae</taxon>
        <taxon>Eurotiales</taxon>
        <taxon>Aspergillaceae</taxon>
        <taxon>Aspergillus</taxon>
        <taxon>Aspergillus subgen. Circumdati</taxon>
    </lineage>
</organism>
<keyword id="KW-0131">Cell cycle</keyword>
<keyword id="KW-0227">DNA damage</keyword>
<keyword id="KW-0234">DNA repair</keyword>
<keyword id="KW-0236">DNA replication inhibitor</keyword>
<keyword id="KW-0469">Meiosis</keyword>
<keyword id="KW-0539">Nucleus</keyword>
<keyword id="KW-1185">Reference proteome</keyword>
<sequence length="1169" mass="134462">MENEEPVLSAPDVQVVDPDVRAHVYSLVTALGGFNGEDADKYVLGDDALACLRDIKRWLKLYDEKHNRMDVARCLGEANLVNGDLLPILAVWANSKKQTKYMSRIALACLELLVPLTWPVELHGELTINHHRHIPYIQHVHVSYKRGLLSHASTSYLRTIIRVGIPSMAIPRSERTTRDEGILKLLLYLLRNIALITPNTRLAAEGDEEETSRSATINAFQDQDVFALLLTMCSNVGDDFTMQDVALLEILFHLIRGVSVEKLFMDDAQRTAKRTDELDDLLRQESSLRREYAKNAPTRHGRFGTMIWVKRDDAKYSTVSGQNVLKDGQATLQKMDETKKWNKPLIRRKPQDLTVHNDFSTPVHLNSTASNNLRMFVEEFLDSGFNPLLTHVRKAIEREADRVMDINTRQFLYTTAWFLEAERARRARQRKKHAESEKPAKELEPDSFGLVAGVLNQETFVFLNRAMQYALDNKDWEDLNAGMRCFTQILLTVQDMAQSPLEEDQEIAENIQNRIFYEETTHDRVLAVIRGYKDQPFGYLDACTELTHVFLRMLERYSKENLDMQVRSRRRARRKAKDVEGTGNDENDEENGSEDEDRLEAERVSKERKFDFRRFAAKFCNQKCVDTFVAFTKHYKELNTEQLKRAHRYFYRIAFKQELSVLLFRLDIINLFYRMIKGPGALDSSKPIFKEWEEFVRQIIRRLTKRLDQRPALFVELLFSKINATTFYLEYGHERQTVTRARKAPAELEIDPRQAHTIEEKISIMVPALVLDGEEDLVTWVSDVLESAVEEREAWETQEKALRDAGAENSKIPNPMISVKARDDACQQAMFSNAKLRLLMTLVKFERLGAEDVPGAAWIIPSAPRAQDLREMKSFIDKYFEKAKRGTLGRDPRELIRRKYGGGKTASDNQHNPDIQFGDDSEGEDEVPDGPLFPPNPRAAPNPANKPTKKKKRKERNPDDEDEDDSVDEETLEERRRARLENSRARLAKIKSDLYVHASDEDTDEEGDKEFFLLEEQRRREQAKRIKHALLTGMTEDGDGSTNKKGQRKRQTTRNRTGEAKSKRQRRGKQADEVDEDDDVVMGNMDAPSPMSDREGTPSGEEDDGFNFDDDLVFSRDREKLLGSAGNEEKDSNRPDKAMAQDEDDDDAPIVAANRRRMRAGFVVDSDSE</sequence>
<name>TOF1_ASPNC</name>
<reference key="1">
    <citation type="journal article" date="2007" name="Nat. Biotechnol.">
        <title>Genome sequencing and analysis of the versatile cell factory Aspergillus niger CBS 513.88.</title>
        <authorList>
            <person name="Pel H.J."/>
            <person name="de Winde J.H."/>
            <person name="Archer D.B."/>
            <person name="Dyer P.S."/>
            <person name="Hofmann G."/>
            <person name="Schaap P.J."/>
            <person name="Turner G."/>
            <person name="de Vries R.P."/>
            <person name="Albang R."/>
            <person name="Albermann K."/>
            <person name="Andersen M.R."/>
            <person name="Bendtsen J.D."/>
            <person name="Benen J.A.E."/>
            <person name="van den Berg M."/>
            <person name="Breestraat S."/>
            <person name="Caddick M.X."/>
            <person name="Contreras R."/>
            <person name="Cornell M."/>
            <person name="Coutinho P.M."/>
            <person name="Danchin E.G.J."/>
            <person name="Debets A.J.M."/>
            <person name="Dekker P."/>
            <person name="van Dijck P.W.M."/>
            <person name="van Dijk A."/>
            <person name="Dijkhuizen L."/>
            <person name="Driessen A.J.M."/>
            <person name="d'Enfert C."/>
            <person name="Geysens S."/>
            <person name="Goosen C."/>
            <person name="Groot G.S.P."/>
            <person name="de Groot P.W.J."/>
            <person name="Guillemette T."/>
            <person name="Henrissat B."/>
            <person name="Herweijer M."/>
            <person name="van den Hombergh J.P.T.W."/>
            <person name="van den Hondel C.A.M.J.J."/>
            <person name="van der Heijden R.T.J.M."/>
            <person name="van der Kaaij R.M."/>
            <person name="Klis F.M."/>
            <person name="Kools H.J."/>
            <person name="Kubicek C.P."/>
            <person name="van Kuyk P.A."/>
            <person name="Lauber J."/>
            <person name="Lu X."/>
            <person name="van der Maarel M.J.E.C."/>
            <person name="Meulenberg R."/>
            <person name="Menke H."/>
            <person name="Mortimer M.A."/>
            <person name="Nielsen J."/>
            <person name="Oliver S.G."/>
            <person name="Olsthoorn M."/>
            <person name="Pal K."/>
            <person name="van Peij N.N.M.E."/>
            <person name="Ram A.F.J."/>
            <person name="Rinas U."/>
            <person name="Roubos J.A."/>
            <person name="Sagt C.M.J."/>
            <person name="Schmoll M."/>
            <person name="Sun J."/>
            <person name="Ussery D."/>
            <person name="Varga J."/>
            <person name="Vervecken W."/>
            <person name="van de Vondervoort P.J.J."/>
            <person name="Wedler H."/>
            <person name="Woesten H.A.B."/>
            <person name="Zeng A.-P."/>
            <person name="van Ooyen A.J.J."/>
            <person name="Visser J."/>
            <person name="Stam H."/>
        </authorList>
    </citation>
    <scope>NUCLEOTIDE SEQUENCE [LARGE SCALE GENOMIC DNA]</scope>
    <source>
        <strain>ATCC MYA-4892 / CBS 513.88 / FGSC A1513</strain>
    </source>
</reference>
<evidence type="ECO:0000250" key="1"/>
<evidence type="ECO:0000256" key="2">
    <source>
        <dbReference type="SAM" id="MobiDB-lite"/>
    </source>
</evidence>
<evidence type="ECO:0000305" key="3"/>
<comment type="function">
    <text evidence="1">Involved in chromosome segregation during meiosis and DNA damage repair.</text>
</comment>
<comment type="subcellular location">
    <subcellularLocation>
        <location evidence="1">Nucleus</location>
    </subcellularLocation>
</comment>
<comment type="similarity">
    <text evidence="3">Belongs to the timeless family.</text>
</comment>
<comment type="sequence caution" evidence="3">
    <conflict type="erroneous gene model prediction">
        <sequence resource="EMBL-CDS" id="CAK41843"/>
    </conflict>
</comment>